<name>RL27_NITWN</name>
<reference key="1">
    <citation type="journal article" date="2006" name="Appl. Environ. Microbiol.">
        <title>Genome sequence of the chemolithoautotrophic nitrite-oxidizing bacterium Nitrobacter winogradskyi Nb-255.</title>
        <authorList>
            <person name="Starkenburg S.R."/>
            <person name="Chain P.S.G."/>
            <person name="Sayavedra-Soto L.A."/>
            <person name="Hauser L."/>
            <person name="Land M.L."/>
            <person name="Larimer F.W."/>
            <person name="Malfatti S.A."/>
            <person name="Klotz M.G."/>
            <person name="Bottomley P.J."/>
            <person name="Arp D.J."/>
            <person name="Hickey W.J."/>
        </authorList>
    </citation>
    <scope>NUCLEOTIDE SEQUENCE [LARGE SCALE GENOMIC DNA]</scope>
    <source>
        <strain>ATCC 25391 / DSM 10237 / CIP 104748 / NCIMB 11846 / Nb-255</strain>
    </source>
</reference>
<gene>
    <name evidence="1" type="primary">rpmA</name>
    <name type="ordered locus">Nwi_0440</name>
</gene>
<feature type="chain" id="PRO_1000017534" description="Large ribosomal subunit protein bL27">
    <location>
        <begin position="1"/>
        <end position="90"/>
    </location>
</feature>
<feature type="region of interest" description="Disordered" evidence="2">
    <location>
        <begin position="1"/>
        <end position="21"/>
    </location>
</feature>
<protein>
    <recommendedName>
        <fullName evidence="1">Large ribosomal subunit protein bL27</fullName>
    </recommendedName>
    <alternativeName>
        <fullName evidence="3">50S ribosomal protein L27</fullName>
    </alternativeName>
</protein>
<accession>Q3SVI4</accession>
<proteinExistence type="inferred from homology"/>
<keyword id="KW-1185">Reference proteome</keyword>
<keyword id="KW-0687">Ribonucleoprotein</keyword>
<keyword id="KW-0689">Ribosomal protein</keyword>
<organism>
    <name type="scientific">Nitrobacter winogradskyi (strain ATCC 25391 / DSM 10237 / CIP 104748 / NCIMB 11846 / Nb-255)</name>
    <dbReference type="NCBI Taxonomy" id="323098"/>
    <lineage>
        <taxon>Bacteria</taxon>
        <taxon>Pseudomonadati</taxon>
        <taxon>Pseudomonadota</taxon>
        <taxon>Alphaproteobacteria</taxon>
        <taxon>Hyphomicrobiales</taxon>
        <taxon>Nitrobacteraceae</taxon>
        <taxon>Nitrobacter</taxon>
    </lineage>
</organism>
<dbReference type="EMBL" id="CP000115">
    <property type="protein sequence ID" value="ABA03707.1"/>
    <property type="molecule type" value="Genomic_DNA"/>
</dbReference>
<dbReference type="RefSeq" id="WP_011313771.1">
    <property type="nucleotide sequence ID" value="NC_007406.1"/>
</dbReference>
<dbReference type="SMR" id="Q3SVI4"/>
<dbReference type="STRING" id="323098.Nwi_0440"/>
<dbReference type="KEGG" id="nwi:Nwi_0440"/>
<dbReference type="eggNOG" id="COG0211">
    <property type="taxonomic scope" value="Bacteria"/>
</dbReference>
<dbReference type="HOGENOM" id="CLU_095424_4_1_5"/>
<dbReference type="OrthoDB" id="9803474at2"/>
<dbReference type="Proteomes" id="UP000002531">
    <property type="component" value="Chromosome"/>
</dbReference>
<dbReference type="GO" id="GO:0022625">
    <property type="term" value="C:cytosolic large ribosomal subunit"/>
    <property type="evidence" value="ECO:0007669"/>
    <property type="project" value="TreeGrafter"/>
</dbReference>
<dbReference type="GO" id="GO:0003735">
    <property type="term" value="F:structural constituent of ribosome"/>
    <property type="evidence" value="ECO:0007669"/>
    <property type="project" value="InterPro"/>
</dbReference>
<dbReference type="GO" id="GO:0006412">
    <property type="term" value="P:translation"/>
    <property type="evidence" value="ECO:0007669"/>
    <property type="project" value="UniProtKB-UniRule"/>
</dbReference>
<dbReference type="FunFam" id="2.40.50.100:FF:000020">
    <property type="entry name" value="50S ribosomal protein L27"/>
    <property type="match status" value="1"/>
</dbReference>
<dbReference type="Gene3D" id="2.40.50.100">
    <property type="match status" value="1"/>
</dbReference>
<dbReference type="HAMAP" id="MF_00539">
    <property type="entry name" value="Ribosomal_bL27"/>
    <property type="match status" value="1"/>
</dbReference>
<dbReference type="InterPro" id="IPR001684">
    <property type="entry name" value="Ribosomal_bL27"/>
</dbReference>
<dbReference type="InterPro" id="IPR018261">
    <property type="entry name" value="Ribosomal_bL27_CS"/>
</dbReference>
<dbReference type="NCBIfam" id="TIGR00062">
    <property type="entry name" value="L27"/>
    <property type="match status" value="1"/>
</dbReference>
<dbReference type="PANTHER" id="PTHR15893:SF0">
    <property type="entry name" value="LARGE RIBOSOMAL SUBUNIT PROTEIN BL27M"/>
    <property type="match status" value="1"/>
</dbReference>
<dbReference type="PANTHER" id="PTHR15893">
    <property type="entry name" value="RIBOSOMAL PROTEIN L27"/>
    <property type="match status" value="1"/>
</dbReference>
<dbReference type="Pfam" id="PF01016">
    <property type="entry name" value="Ribosomal_L27"/>
    <property type="match status" value="1"/>
</dbReference>
<dbReference type="PRINTS" id="PR00063">
    <property type="entry name" value="RIBOSOMALL27"/>
</dbReference>
<dbReference type="SUPFAM" id="SSF110324">
    <property type="entry name" value="Ribosomal L27 protein-like"/>
    <property type="match status" value="1"/>
</dbReference>
<dbReference type="PROSITE" id="PS00831">
    <property type="entry name" value="RIBOSOMAL_L27"/>
    <property type="match status" value="1"/>
</dbReference>
<comment type="similarity">
    <text evidence="1">Belongs to the bacterial ribosomal protein bL27 family.</text>
</comment>
<sequence length="90" mass="9531">MAHKKAGGSSRNGRDSHGKRLGIKAFGGEHVIPGNIIARQRGTTWHPGLNVGMGTDHTLFAKVEGHVAFRVKTGGRTFVSVLPMTEAAAE</sequence>
<evidence type="ECO:0000255" key="1">
    <source>
        <dbReference type="HAMAP-Rule" id="MF_00539"/>
    </source>
</evidence>
<evidence type="ECO:0000256" key="2">
    <source>
        <dbReference type="SAM" id="MobiDB-lite"/>
    </source>
</evidence>
<evidence type="ECO:0000305" key="3"/>